<accession>B4RNG2</accession>
<evidence type="ECO:0000255" key="1">
    <source>
        <dbReference type="HAMAP-Rule" id="MF_00429"/>
    </source>
</evidence>
<gene>
    <name evidence="1" type="primary">nqrE</name>
    <name type="ordered locus">NGK_1672</name>
</gene>
<dbReference type="EC" id="7.2.1.1" evidence="1"/>
<dbReference type="EMBL" id="CP001050">
    <property type="protein sequence ID" value="ACF30320.1"/>
    <property type="molecule type" value="Genomic_DNA"/>
</dbReference>
<dbReference type="RefSeq" id="WP_003689273.1">
    <property type="nucleotide sequence ID" value="NC_011035.1"/>
</dbReference>
<dbReference type="SMR" id="B4RNG2"/>
<dbReference type="GeneID" id="66753630"/>
<dbReference type="KEGG" id="ngk:NGK_1672"/>
<dbReference type="HOGENOM" id="CLU_095255_0_0_4"/>
<dbReference type="Proteomes" id="UP000002564">
    <property type="component" value="Chromosome"/>
</dbReference>
<dbReference type="GO" id="GO:0009276">
    <property type="term" value="C:Gram-negative-bacterium-type cell wall"/>
    <property type="evidence" value="ECO:0007669"/>
    <property type="project" value="InterPro"/>
</dbReference>
<dbReference type="GO" id="GO:0005886">
    <property type="term" value="C:plasma membrane"/>
    <property type="evidence" value="ECO:0007669"/>
    <property type="project" value="UniProtKB-SubCell"/>
</dbReference>
<dbReference type="GO" id="GO:0016655">
    <property type="term" value="F:oxidoreductase activity, acting on NAD(P)H, quinone or similar compound as acceptor"/>
    <property type="evidence" value="ECO:0007669"/>
    <property type="project" value="UniProtKB-UniRule"/>
</dbReference>
<dbReference type="GO" id="GO:0022904">
    <property type="term" value="P:respiratory electron transport chain"/>
    <property type="evidence" value="ECO:0007669"/>
    <property type="project" value="InterPro"/>
</dbReference>
<dbReference type="GO" id="GO:0006814">
    <property type="term" value="P:sodium ion transport"/>
    <property type="evidence" value="ECO:0007669"/>
    <property type="project" value="UniProtKB-UniRule"/>
</dbReference>
<dbReference type="HAMAP" id="MF_00429">
    <property type="entry name" value="NqrE"/>
    <property type="match status" value="1"/>
</dbReference>
<dbReference type="InterPro" id="IPR003667">
    <property type="entry name" value="NqrDE/RnfAE"/>
</dbReference>
<dbReference type="InterPro" id="IPR050133">
    <property type="entry name" value="NqrDE/RnfAE_oxidrdctase"/>
</dbReference>
<dbReference type="InterPro" id="IPR010967">
    <property type="entry name" value="NqrE"/>
</dbReference>
<dbReference type="NCBIfam" id="TIGR01940">
    <property type="entry name" value="nqrE"/>
    <property type="match status" value="1"/>
</dbReference>
<dbReference type="PANTHER" id="PTHR30335">
    <property type="entry name" value="INTEGRAL MEMBRANE PROTEIN OF SOXR-REDUCING COMPLEX"/>
    <property type="match status" value="1"/>
</dbReference>
<dbReference type="PANTHER" id="PTHR30335:SF1">
    <property type="entry name" value="NA(+)-TRANSLOCATING NADH-QUINONE REDUCTASE SUBUNIT E"/>
    <property type="match status" value="1"/>
</dbReference>
<dbReference type="Pfam" id="PF02508">
    <property type="entry name" value="Rnf-Nqr"/>
    <property type="match status" value="1"/>
</dbReference>
<dbReference type="PIRSF" id="PIRSF006102">
    <property type="entry name" value="NQR_DE"/>
    <property type="match status" value="1"/>
</dbReference>
<feature type="chain" id="PRO_1000191702" description="Na(+)-translocating NADH-quinone reductase subunit E">
    <location>
        <begin position="1"/>
        <end position="197"/>
    </location>
</feature>
<feature type="transmembrane region" description="Helical" evidence="1">
    <location>
        <begin position="11"/>
        <end position="31"/>
    </location>
</feature>
<feature type="transmembrane region" description="Helical" evidence="1">
    <location>
        <begin position="35"/>
        <end position="55"/>
    </location>
</feature>
<feature type="transmembrane region" description="Helical" evidence="1">
    <location>
        <begin position="76"/>
        <end position="96"/>
    </location>
</feature>
<feature type="transmembrane region" description="Helical" evidence="1">
    <location>
        <begin position="108"/>
        <end position="128"/>
    </location>
</feature>
<feature type="transmembrane region" description="Helical" evidence="1">
    <location>
        <begin position="139"/>
        <end position="159"/>
    </location>
</feature>
<feature type="transmembrane region" description="Helical" evidence="1">
    <location>
        <begin position="175"/>
        <end position="195"/>
    </location>
</feature>
<organism>
    <name type="scientific">Neisseria gonorrhoeae (strain NCCP11945)</name>
    <dbReference type="NCBI Taxonomy" id="521006"/>
    <lineage>
        <taxon>Bacteria</taxon>
        <taxon>Pseudomonadati</taxon>
        <taxon>Pseudomonadota</taxon>
        <taxon>Betaproteobacteria</taxon>
        <taxon>Neisseriales</taxon>
        <taxon>Neisseriaceae</taxon>
        <taxon>Neisseria</taxon>
    </lineage>
</organism>
<proteinExistence type="inferred from homology"/>
<keyword id="KW-0997">Cell inner membrane</keyword>
<keyword id="KW-1003">Cell membrane</keyword>
<keyword id="KW-0406">Ion transport</keyword>
<keyword id="KW-0472">Membrane</keyword>
<keyword id="KW-0520">NAD</keyword>
<keyword id="KW-0915">Sodium</keyword>
<keyword id="KW-0739">Sodium transport</keyword>
<keyword id="KW-1278">Translocase</keyword>
<keyword id="KW-0812">Transmembrane</keyword>
<keyword id="KW-1133">Transmembrane helix</keyword>
<keyword id="KW-0813">Transport</keyword>
<keyword id="KW-0830">Ubiquinone</keyword>
<reference key="1">
    <citation type="journal article" date="2008" name="J. Bacteriol.">
        <title>Complete genome sequence of Neisseria gonorrhoeae NCCP11945.</title>
        <authorList>
            <person name="Chung G.T."/>
            <person name="Yoo J.S."/>
            <person name="Oh H.B."/>
            <person name="Lee Y.S."/>
            <person name="Cha S.H."/>
            <person name="Kim S.J."/>
            <person name="Yoo C.K."/>
        </authorList>
    </citation>
    <scope>NUCLEOTIDE SEQUENCE [LARGE SCALE GENOMIC DNA]</scope>
    <source>
        <strain>NCCP11945</strain>
    </source>
</reference>
<protein>
    <recommendedName>
        <fullName evidence="1">Na(+)-translocating NADH-quinone reductase subunit E</fullName>
        <shortName evidence="1">Na(+)-NQR subunit E</shortName>
        <shortName evidence="1">Na(+)-translocating NQR subunit E</shortName>
        <ecNumber evidence="1">7.2.1.1</ecNumber>
    </recommendedName>
    <alternativeName>
        <fullName evidence="1">NQR complex subunit E</fullName>
    </alternativeName>
    <alternativeName>
        <fullName evidence="1">NQR-1 subunit E</fullName>
    </alternativeName>
</protein>
<comment type="function">
    <text evidence="1">NQR complex catalyzes the reduction of ubiquinone-1 to ubiquinol by two successive reactions, coupled with the transport of Na(+) ions from the cytoplasm to the periplasm. NqrA to NqrE are probably involved in the second step, the conversion of ubisemiquinone to ubiquinol.</text>
</comment>
<comment type="catalytic activity">
    <reaction evidence="1">
        <text>a ubiquinone + n Na(+)(in) + NADH + H(+) = a ubiquinol + n Na(+)(out) + NAD(+)</text>
        <dbReference type="Rhea" id="RHEA:47748"/>
        <dbReference type="Rhea" id="RHEA-COMP:9565"/>
        <dbReference type="Rhea" id="RHEA-COMP:9566"/>
        <dbReference type="ChEBI" id="CHEBI:15378"/>
        <dbReference type="ChEBI" id="CHEBI:16389"/>
        <dbReference type="ChEBI" id="CHEBI:17976"/>
        <dbReference type="ChEBI" id="CHEBI:29101"/>
        <dbReference type="ChEBI" id="CHEBI:57540"/>
        <dbReference type="ChEBI" id="CHEBI:57945"/>
        <dbReference type="EC" id="7.2.1.1"/>
    </reaction>
</comment>
<comment type="subunit">
    <text evidence="1">Composed of six subunits; NqrA, NqrB, NqrC, NqrD, NqrE and NqrF.</text>
</comment>
<comment type="subcellular location">
    <subcellularLocation>
        <location evidence="1">Cell inner membrane</location>
        <topology evidence="1">Multi-pass membrane protein</topology>
    </subcellularLocation>
</comment>
<comment type="similarity">
    <text evidence="1">Belongs to the NqrDE/RnfAE family.</text>
</comment>
<name>NQRE_NEIG2</name>
<sequence>MEHYLSLFIKSVFIENMALSFFLGMCTFLAVSKKVSTAFGLGVAVIFVLGLSVPANQLVYSLLKDGAIVEGVDLTFLKFITFIGVIAALVQILEMFLDKFVPALYNALGIYLPLITVNCAIFGAVSFMAQREYDFGESVVYGFGAGLGWMLAIVALAGITEKMKYSDAPKGLKGLGITFIAAGLMAMAFMSFSGIQL</sequence>